<proteinExistence type="inferred from homology"/>
<gene>
    <name evidence="1" type="primary">mraY</name>
    <name type="ordered locus">RPA3533</name>
</gene>
<reference key="1">
    <citation type="journal article" date="2004" name="Nat. Biotechnol.">
        <title>Complete genome sequence of the metabolically versatile photosynthetic bacterium Rhodopseudomonas palustris.</title>
        <authorList>
            <person name="Larimer F.W."/>
            <person name="Chain P."/>
            <person name="Hauser L."/>
            <person name="Lamerdin J.E."/>
            <person name="Malfatti S."/>
            <person name="Do L."/>
            <person name="Land M.L."/>
            <person name="Pelletier D.A."/>
            <person name="Beatty J.T."/>
            <person name="Lang A.S."/>
            <person name="Tabita F.R."/>
            <person name="Gibson J.L."/>
            <person name="Hanson T.E."/>
            <person name="Bobst C."/>
            <person name="Torres y Torres J.L."/>
            <person name="Peres C."/>
            <person name="Harrison F.H."/>
            <person name="Gibson J."/>
            <person name="Harwood C.S."/>
        </authorList>
    </citation>
    <scope>NUCLEOTIDE SEQUENCE [LARGE SCALE GENOMIC DNA]</scope>
    <source>
        <strain>ATCC BAA-98 / CGA009</strain>
    </source>
</reference>
<protein>
    <recommendedName>
        <fullName evidence="1">Phospho-N-acetylmuramoyl-pentapeptide-transferase</fullName>
        <ecNumber evidence="1">2.7.8.13</ecNumber>
    </recommendedName>
    <alternativeName>
        <fullName evidence="1">UDP-MurNAc-pentapeptide phosphotransferase</fullName>
    </alternativeName>
</protein>
<name>MRAY_RHOPA</name>
<dbReference type="EC" id="2.7.8.13" evidence="1"/>
<dbReference type="EMBL" id="BX572604">
    <property type="protein sequence ID" value="CAE28974.1"/>
    <property type="molecule type" value="Genomic_DNA"/>
</dbReference>
<dbReference type="RefSeq" id="WP_011159073.1">
    <property type="nucleotide sequence ID" value="NZ_CP116810.1"/>
</dbReference>
<dbReference type="SMR" id="Q6N408"/>
<dbReference type="STRING" id="258594.RPA3533"/>
<dbReference type="GeneID" id="66894635"/>
<dbReference type="eggNOG" id="COG0472">
    <property type="taxonomic scope" value="Bacteria"/>
</dbReference>
<dbReference type="HOGENOM" id="CLU_023982_0_0_5"/>
<dbReference type="PhylomeDB" id="Q6N408"/>
<dbReference type="UniPathway" id="UPA00219"/>
<dbReference type="GO" id="GO:0005886">
    <property type="term" value="C:plasma membrane"/>
    <property type="evidence" value="ECO:0007669"/>
    <property type="project" value="UniProtKB-SubCell"/>
</dbReference>
<dbReference type="GO" id="GO:0046872">
    <property type="term" value="F:metal ion binding"/>
    <property type="evidence" value="ECO:0007669"/>
    <property type="project" value="UniProtKB-KW"/>
</dbReference>
<dbReference type="GO" id="GO:0008963">
    <property type="term" value="F:phospho-N-acetylmuramoyl-pentapeptide-transferase activity"/>
    <property type="evidence" value="ECO:0007669"/>
    <property type="project" value="UniProtKB-UniRule"/>
</dbReference>
<dbReference type="GO" id="GO:0051992">
    <property type="term" value="F:UDP-N-acetylmuramoyl-L-alanyl-D-glutamyl-meso-2,6-diaminopimelyl-D-alanyl-D-alanine:undecaprenyl-phosphate transferase activity"/>
    <property type="evidence" value="ECO:0007669"/>
    <property type="project" value="RHEA"/>
</dbReference>
<dbReference type="GO" id="GO:0051301">
    <property type="term" value="P:cell division"/>
    <property type="evidence" value="ECO:0007669"/>
    <property type="project" value="UniProtKB-KW"/>
</dbReference>
<dbReference type="GO" id="GO:0071555">
    <property type="term" value="P:cell wall organization"/>
    <property type="evidence" value="ECO:0007669"/>
    <property type="project" value="UniProtKB-KW"/>
</dbReference>
<dbReference type="GO" id="GO:0009252">
    <property type="term" value="P:peptidoglycan biosynthetic process"/>
    <property type="evidence" value="ECO:0007669"/>
    <property type="project" value="UniProtKB-UniRule"/>
</dbReference>
<dbReference type="GO" id="GO:0008360">
    <property type="term" value="P:regulation of cell shape"/>
    <property type="evidence" value="ECO:0007669"/>
    <property type="project" value="UniProtKB-KW"/>
</dbReference>
<dbReference type="CDD" id="cd06852">
    <property type="entry name" value="GT_MraY"/>
    <property type="match status" value="1"/>
</dbReference>
<dbReference type="HAMAP" id="MF_00038">
    <property type="entry name" value="MraY"/>
    <property type="match status" value="1"/>
</dbReference>
<dbReference type="InterPro" id="IPR000715">
    <property type="entry name" value="Glycosyl_transferase_4"/>
</dbReference>
<dbReference type="InterPro" id="IPR003524">
    <property type="entry name" value="PNAcMuramoyl-5peptid_Trfase"/>
</dbReference>
<dbReference type="InterPro" id="IPR018480">
    <property type="entry name" value="PNAcMuramoyl-5peptid_Trfase_CS"/>
</dbReference>
<dbReference type="NCBIfam" id="TIGR00445">
    <property type="entry name" value="mraY"/>
    <property type="match status" value="1"/>
</dbReference>
<dbReference type="PANTHER" id="PTHR22926">
    <property type="entry name" value="PHOSPHO-N-ACETYLMURAMOYL-PENTAPEPTIDE-TRANSFERASE"/>
    <property type="match status" value="1"/>
</dbReference>
<dbReference type="PANTHER" id="PTHR22926:SF5">
    <property type="entry name" value="PHOSPHO-N-ACETYLMURAMOYL-PENTAPEPTIDE-TRANSFERASE HOMOLOG"/>
    <property type="match status" value="1"/>
</dbReference>
<dbReference type="Pfam" id="PF00953">
    <property type="entry name" value="Glycos_transf_4"/>
    <property type="match status" value="1"/>
</dbReference>
<dbReference type="Pfam" id="PF10555">
    <property type="entry name" value="MraY_sig1"/>
    <property type="match status" value="1"/>
</dbReference>
<dbReference type="PROSITE" id="PS01347">
    <property type="entry name" value="MRAY_1"/>
    <property type="match status" value="1"/>
</dbReference>
<dbReference type="PROSITE" id="PS01348">
    <property type="entry name" value="MRAY_2"/>
    <property type="match status" value="1"/>
</dbReference>
<feature type="chain" id="PRO_0000108877" description="Phospho-N-acetylmuramoyl-pentapeptide-transferase">
    <location>
        <begin position="1"/>
        <end position="361"/>
    </location>
</feature>
<feature type="transmembrane region" description="Helical" evidence="1">
    <location>
        <begin position="25"/>
        <end position="45"/>
    </location>
</feature>
<feature type="transmembrane region" description="Helical" evidence="1">
    <location>
        <begin position="72"/>
        <end position="92"/>
    </location>
</feature>
<feature type="transmembrane region" description="Helical" evidence="1">
    <location>
        <begin position="95"/>
        <end position="115"/>
    </location>
</feature>
<feature type="transmembrane region" description="Helical" evidence="1">
    <location>
        <begin position="135"/>
        <end position="155"/>
    </location>
</feature>
<feature type="transmembrane region" description="Helical" evidence="1">
    <location>
        <begin position="169"/>
        <end position="189"/>
    </location>
</feature>
<feature type="transmembrane region" description="Helical" evidence="1">
    <location>
        <begin position="200"/>
        <end position="220"/>
    </location>
</feature>
<feature type="transmembrane region" description="Helical" evidence="1">
    <location>
        <begin position="240"/>
        <end position="260"/>
    </location>
</feature>
<feature type="transmembrane region" description="Helical" evidence="1">
    <location>
        <begin position="264"/>
        <end position="284"/>
    </location>
</feature>
<feature type="transmembrane region" description="Helical" evidence="1">
    <location>
        <begin position="289"/>
        <end position="309"/>
    </location>
</feature>
<feature type="transmembrane region" description="Helical" evidence="1">
    <location>
        <begin position="338"/>
        <end position="358"/>
    </location>
</feature>
<evidence type="ECO:0000255" key="1">
    <source>
        <dbReference type="HAMAP-Rule" id="MF_00038"/>
    </source>
</evidence>
<sequence length="361" mass="38717">MLYWLIDLSSSFPAFNVFRYITFRTGGAMVTGALFVFMFGPWIIDNLRLRQGKGQPIRTDGPQSHLMTKKGTPTMGGLMILSGLTVGTLLWANPLNPYVWIVLAVTLGFGFVGFYDDYMKVTKQTHAGISGRTRLLIEFTIAGAACFALVWLGRAPLSSSLVIPFFKEVMLNLGWAFVVFGAFVVVGAGNAVNLTDGLDGLAIVPVMIAAASFGLISYLAGNAVFAEYLQINYVAGTGELAVLCGALLGAGLGFLWFNAPPASIFMGDTGSLALGGMLGSIAVAVKHEIVLAVIGGLFVLEAVSVIVQVASFKLTGKRVFKMAPIHHHFEQKGWTEPQIVIRFWIIAVMLALAGLSTLKLR</sequence>
<keyword id="KW-0131">Cell cycle</keyword>
<keyword id="KW-0132">Cell division</keyword>
<keyword id="KW-0997">Cell inner membrane</keyword>
<keyword id="KW-1003">Cell membrane</keyword>
<keyword id="KW-0133">Cell shape</keyword>
<keyword id="KW-0961">Cell wall biogenesis/degradation</keyword>
<keyword id="KW-0460">Magnesium</keyword>
<keyword id="KW-0472">Membrane</keyword>
<keyword id="KW-0479">Metal-binding</keyword>
<keyword id="KW-0573">Peptidoglycan synthesis</keyword>
<keyword id="KW-0808">Transferase</keyword>
<keyword id="KW-0812">Transmembrane</keyword>
<keyword id="KW-1133">Transmembrane helix</keyword>
<comment type="function">
    <text evidence="1">Catalyzes the initial step of the lipid cycle reactions in the biosynthesis of the cell wall peptidoglycan: transfers peptidoglycan precursor phospho-MurNAc-pentapeptide from UDP-MurNAc-pentapeptide onto the lipid carrier undecaprenyl phosphate, yielding undecaprenyl-pyrophosphoryl-MurNAc-pentapeptide, known as lipid I.</text>
</comment>
<comment type="catalytic activity">
    <reaction evidence="1">
        <text>UDP-N-acetyl-alpha-D-muramoyl-L-alanyl-gamma-D-glutamyl-meso-2,6-diaminopimeloyl-D-alanyl-D-alanine + di-trans,octa-cis-undecaprenyl phosphate = di-trans,octa-cis-undecaprenyl diphospho-N-acetyl-alpha-D-muramoyl-L-alanyl-D-glutamyl-meso-2,6-diaminopimeloyl-D-alanyl-D-alanine + UMP</text>
        <dbReference type="Rhea" id="RHEA:28386"/>
        <dbReference type="ChEBI" id="CHEBI:57865"/>
        <dbReference type="ChEBI" id="CHEBI:60392"/>
        <dbReference type="ChEBI" id="CHEBI:61386"/>
        <dbReference type="ChEBI" id="CHEBI:61387"/>
        <dbReference type="EC" id="2.7.8.13"/>
    </reaction>
</comment>
<comment type="cofactor">
    <cofactor evidence="1">
        <name>Mg(2+)</name>
        <dbReference type="ChEBI" id="CHEBI:18420"/>
    </cofactor>
</comment>
<comment type="pathway">
    <text evidence="1">Cell wall biogenesis; peptidoglycan biosynthesis.</text>
</comment>
<comment type="subcellular location">
    <subcellularLocation>
        <location evidence="1">Cell inner membrane</location>
        <topology evidence="1">Multi-pass membrane protein</topology>
    </subcellularLocation>
</comment>
<comment type="similarity">
    <text evidence="1">Belongs to the glycosyltransferase 4 family. MraY subfamily.</text>
</comment>
<accession>Q6N408</accession>
<organism>
    <name type="scientific">Rhodopseudomonas palustris (strain ATCC BAA-98 / CGA009)</name>
    <dbReference type="NCBI Taxonomy" id="258594"/>
    <lineage>
        <taxon>Bacteria</taxon>
        <taxon>Pseudomonadati</taxon>
        <taxon>Pseudomonadota</taxon>
        <taxon>Alphaproteobacteria</taxon>
        <taxon>Hyphomicrobiales</taxon>
        <taxon>Nitrobacteraceae</taxon>
        <taxon>Rhodopseudomonas</taxon>
    </lineage>
</organism>